<sequence>MTKSQRLQVAIIGSGNIGTDLMIKVMRNSKHLSMGAMVGIDAASDGLARAGRLGVPVTHEGITGLVGLPNFGDIRIAFDATSAGAHAGHNEVLQRHGVKVIDLTPAAIGPYVIPVVNLEEQLSSPNINMVTCGGQATIPIVRAVSQIARVRYAEIVASIASKSAGPGTRANIDEFTETTSAAIVSVGRAEHGKAIIVLNPAEPSLMMRDTVFCLVDADADQEAIRLSVRDMVRSVAAYVPGYRLKQDVQFDVIPDKAPVNVPGIGRVSGLKVSVFLEVEGAAHYLPAYAGNLDIMTSAALAAADKIAASLITAR</sequence>
<accession>Q120P0</accession>
<keyword id="KW-0058">Aromatic hydrocarbons catabolism</keyword>
<keyword id="KW-0520">NAD</keyword>
<keyword id="KW-0560">Oxidoreductase</keyword>
<keyword id="KW-0614">Plasmid</keyword>
<keyword id="KW-1185">Reference proteome</keyword>
<dbReference type="EC" id="1.2.1.10" evidence="1"/>
<dbReference type="EMBL" id="CP000317">
    <property type="protein sequence ID" value="ABE47002.1"/>
    <property type="molecule type" value="Genomic_DNA"/>
</dbReference>
<dbReference type="RefSeq" id="WP_011485985.1">
    <property type="nucleotide sequence ID" value="NC_007949.1"/>
</dbReference>
<dbReference type="SMR" id="Q120P0"/>
<dbReference type="KEGG" id="pol:Bpro_5135"/>
<dbReference type="HOGENOM" id="CLU_062208_0_0_4"/>
<dbReference type="OrthoDB" id="9786743at2"/>
<dbReference type="Proteomes" id="UP000001983">
    <property type="component" value="Plasmid pPol360"/>
</dbReference>
<dbReference type="GO" id="GO:0008774">
    <property type="term" value="F:acetaldehyde dehydrogenase (acetylating) activity"/>
    <property type="evidence" value="ECO:0007669"/>
    <property type="project" value="UniProtKB-UniRule"/>
</dbReference>
<dbReference type="GO" id="GO:0051287">
    <property type="term" value="F:NAD binding"/>
    <property type="evidence" value="ECO:0007669"/>
    <property type="project" value="UniProtKB-UniRule"/>
</dbReference>
<dbReference type="GO" id="GO:0009056">
    <property type="term" value="P:catabolic process"/>
    <property type="evidence" value="ECO:0007669"/>
    <property type="project" value="UniProtKB-KW"/>
</dbReference>
<dbReference type="CDD" id="cd23933">
    <property type="entry name" value="ALDH_C"/>
    <property type="match status" value="1"/>
</dbReference>
<dbReference type="Gene3D" id="3.30.360.10">
    <property type="entry name" value="Dihydrodipicolinate Reductase, domain 2"/>
    <property type="match status" value="1"/>
</dbReference>
<dbReference type="Gene3D" id="3.40.50.720">
    <property type="entry name" value="NAD(P)-binding Rossmann-like Domain"/>
    <property type="match status" value="1"/>
</dbReference>
<dbReference type="HAMAP" id="MF_01657">
    <property type="entry name" value="Ac_ald_DH_ac"/>
    <property type="match status" value="1"/>
</dbReference>
<dbReference type="InterPro" id="IPR003361">
    <property type="entry name" value="Acetaldehyde_dehydrogenase"/>
</dbReference>
<dbReference type="InterPro" id="IPR015426">
    <property type="entry name" value="Acetylaldehyde_DH_C"/>
</dbReference>
<dbReference type="InterPro" id="IPR036291">
    <property type="entry name" value="NAD(P)-bd_dom_sf"/>
</dbReference>
<dbReference type="InterPro" id="IPR000534">
    <property type="entry name" value="Semialdehyde_DH_NAD-bd"/>
</dbReference>
<dbReference type="NCBIfam" id="TIGR03215">
    <property type="entry name" value="ac_ald_DH_ac"/>
    <property type="match status" value="1"/>
</dbReference>
<dbReference type="NCBIfam" id="NF006157">
    <property type="entry name" value="PRK08300.1"/>
    <property type="match status" value="1"/>
</dbReference>
<dbReference type="Pfam" id="PF09290">
    <property type="entry name" value="AcetDehyd-dimer"/>
    <property type="match status" value="1"/>
</dbReference>
<dbReference type="Pfam" id="PF01118">
    <property type="entry name" value="Semialdhyde_dh"/>
    <property type="match status" value="1"/>
</dbReference>
<dbReference type="PIRSF" id="PIRSF015689">
    <property type="entry name" value="Actaldh_dh_actl"/>
    <property type="match status" value="1"/>
</dbReference>
<dbReference type="SMART" id="SM00859">
    <property type="entry name" value="Semialdhyde_dh"/>
    <property type="match status" value="1"/>
</dbReference>
<dbReference type="SUPFAM" id="SSF55347">
    <property type="entry name" value="Glyceraldehyde-3-phosphate dehydrogenase-like, C-terminal domain"/>
    <property type="match status" value="1"/>
</dbReference>
<dbReference type="SUPFAM" id="SSF51735">
    <property type="entry name" value="NAD(P)-binding Rossmann-fold domains"/>
    <property type="match status" value="1"/>
</dbReference>
<evidence type="ECO:0000255" key="1">
    <source>
        <dbReference type="HAMAP-Rule" id="MF_01657"/>
    </source>
</evidence>
<name>ACDH_POLSJ</name>
<proteinExistence type="inferred from homology"/>
<organism>
    <name type="scientific">Polaromonas sp. (strain JS666 / ATCC BAA-500)</name>
    <dbReference type="NCBI Taxonomy" id="296591"/>
    <lineage>
        <taxon>Bacteria</taxon>
        <taxon>Pseudomonadati</taxon>
        <taxon>Pseudomonadota</taxon>
        <taxon>Betaproteobacteria</taxon>
        <taxon>Burkholderiales</taxon>
        <taxon>Comamonadaceae</taxon>
        <taxon>Polaromonas</taxon>
    </lineage>
</organism>
<comment type="catalytic activity">
    <reaction evidence="1">
        <text>acetaldehyde + NAD(+) + CoA = acetyl-CoA + NADH + H(+)</text>
        <dbReference type="Rhea" id="RHEA:23288"/>
        <dbReference type="ChEBI" id="CHEBI:15343"/>
        <dbReference type="ChEBI" id="CHEBI:15378"/>
        <dbReference type="ChEBI" id="CHEBI:57287"/>
        <dbReference type="ChEBI" id="CHEBI:57288"/>
        <dbReference type="ChEBI" id="CHEBI:57540"/>
        <dbReference type="ChEBI" id="CHEBI:57945"/>
        <dbReference type="EC" id="1.2.1.10"/>
    </reaction>
</comment>
<comment type="similarity">
    <text evidence="1">Belongs to the acetaldehyde dehydrogenase family.</text>
</comment>
<protein>
    <recommendedName>
        <fullName evidence="1">Acetaldehyde dehydrogenase</fullName>
        <ecNumber evidence="1">1.2.1.10</ecNumber>
    </recommendedName>
    <alternativeName>
        <fullName evidence="1">Acetaldehyde dehydrogenase [acetylating]</fullName>
    </alternativeName>
</protein>
<geneLocation type="plasmid">
    <name>pPol360</name>
</geneLocation>
<reference key="1">
    <citation type="journal article" date="2008" name="Appl. Environ. Microbiol.">
        <title>The genome of Polaromonas sp. strain JS666: insights into the evolution of a hydrocarbon- and xenobiotic-degrading bacterium, and features of relevance to biotechnology.</title>
        <authorList>
            <person name="Mattes T.E."/>
            <person name="Alexander A.K."/>
            <person name="Richardson P.M."/>
            <person name="Munk A.C."/>
            <person name="Han C.S."/>
            <person name="Stothard P."/>
            <person name="Coleman N.V."/>
        </authorList>
    </citation>
    <scope>NUCLEOTIDE SEQUENCE [LARGE SCALE GENOMIC DNA]</scope>
    <source>
        <strain>JS666 / ATCC BAA-500</strain>
        <plasmid>pPol360</plasmid>
    </source>
</reference>
<feature type="chain" id="PRO_0000387704" description="Acetaldehyde dehydrogenase">
    <location>
        <begin position="1"/>
        <end position="314"/>
    </location>
</feature>
<feature type="active site" description="Acyl-thioester intermediate" evidence="1">
    <location>
        <position position="132"/>
    </location>
</feature>
<feature type="binding site" evidence="1">
    <location>
        <begin position="14"/>
        <end position="17"/>
    </location>
    <ligand>
        <name>NAD(+)</name>
        <dbReference type="ChEBI" id="CHEBI:57540"/>
    </ligand>
</feature>
<feature type="binding site" evidence="1">
    <location>
        <begin position="163"/>
        <end position="171"/>
    </location>
    <ligand>
        <name>NAD(+)</name>
        <dbReference type="ChEBI" id="CHEBI:57540"/>
    </ligand>
</feature>
<feature type="binding site" evidence="1">
    <location>
        <position position="291"/>
    </location>
    <ligand>
        <name>NAD(+)</name>
        <dbReference type="ChEBI" id="CHEBI:57540"/>
    </ligand>
</feature>
<gene>
    <name type="ordered locus">Bpro_5135</name>
</gene>